<keyword id="KW-0053">Apoptosis</keyword>
<keyword id="KW-0472">Membrane</keyword>
<keyword id="KW-0496">Mitochondrion</keyword>
<keyword id="KW-1267">Proteomics identification</keyword>
<keyword id="KW-1185">Reference proteome</keyword>
<keyword id="KW-0812">Transmembrane</keyword>
<keyword id="KW-1133">Transmembrane helix</keyword>
<accession>Q96A26</accession>
<accession>Q9NRN6</accession>
<accession>Q9UJX8</accession>
<sequence>MGSLSGLRLAAGSCFRLCERDVSSSLRLTRSSDLKRINGFCTKPQESPGAPSRTYNRVPLHKPTDWQKKILIWSGRFKKEDEIPETVSLEMLDAAKNKMRVKISYLMIALTVVGCIFMVIEGKKAAQRHETLTSLNLEKKARLKEEAAMKAKTE</sequence>
<organism>
    <name type="scientific">Homo sapiens</name>
    <name type="common">Human</name>
    <dbReference type="NCBI Taxonomy" id="9606"/>
    <lineage>
        <taxon>Eukaryota</taxon>
        <taxon>Metazoa</taxon>
        <taxon>Chordata</taxon>
        <taxon>Craniata</taxon>
        <taxon>Vertebrata</taxon>
        <taxon>Euteleostomi</taxon>
        <taxon>Mammalia</taxon>
        <taxon>Eutheria</taxon>
        <taxon>Euarchontoglires</taxon>
        <taxon>Primates</taxon>
        <taxon>Haplorrhini</taxon>
        <taxon>Catarrhini</taxon>
        <taxon>Hominidae</taxon>
        <taxon>Homo</taxon>
    </lineage>
</organism>
<dbReference type="EMBL" id="AF191020">
    <property type="protein sequence ID" value="AAF09484.1"/>
    <property type="status" value="ALT_FRAME"/>
    <property type="molecule type" value="mRNA"/>
</dbReference>
<dbReference type="EMBL" id="AF201944">
    <property type="protein sequence ID" value="AAF86880.1"/>
    <property type="molecule type" value="mRNA"/>
</dbReference>
<dbReference type="EMBL" id="AF107495">
    <property type="protein sequence ID" value="AAG39275.1"/>
    <property type="molecule type" value="mRNA"/>
</dbReference>
<dbReference type="EMBL" id="BC010896">
    <property type="protein sequence ID" value="AAH10896.1"/>
    <property type="molecule type" value="mRNA"/>
</dbReference>
<dbReference type="EMBL" id="BC015060">
    <property type="protein sequence ID" value="AAH15060.1"/>
    <property type="molecule type" value="mRNA"/>
</dbReference>
<dbReference type="CCDS" id="CCDS43139.1"/>
<dbReference type="RefSeq" id="NP_055182.3">
    <property type="nucleotide sequence ID" value="NM_014367.3"/>
</dbReference>
<dbReference type="SMR" id="Q96A26"/>
<dbReference type="BioGRID" id="117691">
    <property type="interactions" value="86"/>
</dbReference>
<dbReference type="FunCoup" id="Q96A26">
    <property type="interactions" value="1811"/>
</dbReference>
<dbReference type="IntAct" id="Q96A26">
    <property type="interactions" value="43"/>
</dbReference>
<dbReference type="MINT" id="Q96A26"/>
<dbReference type="STRING" id="9606.ENSP00000419088"/>
<dbReference type="GlyGen" id="Q96A26">
    <property type="glycosylation" value="1 site, 1 O-linked glycan (1 site)"/>
</dbReference>
<dbReference type="iPTMnet" id="Q96A26"/>
<dbReference type="MetOSite" id="Q96A26"/>
<dbReference type="PhosphoSitePlus" id="Q96A26"/>
<dbReference type="SwissPalm" id="Q96A26"/>
<dbReference type="BioMuta" id="FAM162A"/>
<dbReference type="DMDM" id="117949400"/>
<dbReference type="jPOST" id="Q96A26"/>
<dbReference type="MassIVE" id="Q96A26"/>
<dbReference type="PaxDb" id="9606-ENSP00000419088"/>
<dbReference type="PeptideAtlas" id="Q96A26"/>
<dbReference type="ProteomicsDB" id="75897"/>
<dbReference type="Pumba" id="Q96A26"/>
<dbReference type="TopDownProteomics" id="Q96A26"/>
<dbReference type="Antibodypedia" id="32893">
    <property type="antibodies" value="75 antibodies from 19 providers"/>
</dbReference>
<dbReference type="DNASU" id="26355"/>
<dbReference type="Ensembl" id="ENST00000477892.5">
    <property type="protein sequence ID" value="ENSP00000419088.1"/>
    <property type="gene ID" value="ENSG00000114023.16"/>
</dbReference>
<dbReference type="GeneID" id="26355"/>
<dbReference type="KEGG" id="hsa:26355"/>
<dbReference type="MANE-Select" id="ENST00000477892.5">
    <property type="protein sequence ID" value="ENSP00000419088.1"/>
    <property type="RefSeq nucleotide sequence ID" value="NM_014367.4"/>
    <property type="RefSeq protein sequence ID" value="NP_055182.3"/>
</dbReference>
<dbReference type="UCSC" id="uc003eez.4">
    <property type="organism name" value="human"/>
</dbReference>
<dbReference type="AGR" id="HGNC:17865"/>
<dbReference type="CTD" id="26355"/>
<dbReference type="DisGeNET" id="26355"/>
<dbReference type="GeneCards" id="FAM162A"/>
<dbReference type="HGNC" id="HGNC:17865">
    <property type="gene designation" value="FAM162A"/>
</dbReference>
<dbReference type="HPA" id="ENSG00000114023">
    <property type="expression patterns" value="Low tissue specificity"/>
</dbReference>
<dbReference type="MIM" id="608017">
    <property type="type" value="gene"/>
</dbReference>
<dbReference type="neXtProt" id="NX_Q96A26"/>
<dbReference type="OpenTargets" id="ENSG00000114023"/>
<dbReference type="PharmGKB" id="PA162386916"/>
<dbReference type="VEuPathDB" id="HostDB:ENSG00000114023"/>
<dbReference type="eggNOG" id="ENOG502S1PN">
    <property type="taxonomic scope" value="Eukaryota"/>
</dbReference>
<dbReference type="GeneTree" id="ENSGT00640000091497"/>
<dbReference type="InParanoid" id="Q96A26"/>
<dbReference type="OMA" id="GMCNKLP"/>
<dbReference type="OrthoDB" id="8193498at2759"/>
<dbReference type="PAN-GO" id="Q96A26">
    <property type="GO annotations" value="4 GO annotations based on evolutionary models"/>
</dbReference>
<dbReference type="PhylomeDB" id="Q96A26"/>
<dbReference type="TreeFam" id="TF323771"/>
<dbReference type="PathwayCommons" id="Q96A26"/>
<dbReference type="SignaLink" id="Q96A26"/>
<dbReference type="SIGNOR" id="Q96A26"/>
<dbReference type="BioGRID-ORCS" id="26355">
    <property type="hits" value="16 hits in 1168 CRISPR screens"/>
</dbReference>
<dbReference type="ChiTaRS" id="FAM162A">
    <property type="organism name" value="human"/>
</dbReference>
<dbReference type="GenomeRNAi" id="26355"/>
<dbReference type="Pharos" id="Q96A26">
    <property type="development level" value="Tbio"/>
</dbReference>
<dbReference type="PRO" id="PR:Q96A26"/>
<dbReference type="Proteomes" id="UP000005640">
    <property type="component" value="Chromosome 3"/>
</dbReference>
<dbReference type="RNAct" id="Q96A26">
    <property type="molecule type" value="protein"/>
</dbReference>
<dbReference type="Bgee" id="ENSG00000114023">
    <property type="expression patterns" value="Expressed in mucosa of sigmoid colon and 210 other cell types or tissues"/>
</dbReference>
<dbReference type="ExpressionAtlas" id="Q96A26">
    <property type="expression patterns" value="baseline and differential"/>
</dbReference>
<dbReference type="GO" id="GO:0005829">
    <property type="term" value="C:cytosol"/>
    <property type="evidence" value="ECO:0000314"/>
    <property type="project" value="HPA"/>
</dbReference>
<dbReference type="GO" id="GO:0031966">
    <property type="term" value="C:mitochondrial membrane"/>
    <property type="evidence" value="ECO:0007669"/>
    <property type="project" value="UniProtKB-SubCell"/>
</dbReference>
<dbReference type="GO" id="GO:0005739">
    <property type="term" value="C:mitochondrion"/>
    <property type="evidence" value="ECO:0000314"/>
    <property type="project" value="HPA"/>
</dbReference>
<dbReference type="GO" id="GO:0071456">
    <property type="term" value="P:cellular response to hypoxia"/>
    <property type="evidence" value="ECO:0000314"/>
    <property type="project" value="UniProtKB"/>
</dbReference>
<dbReference type="GO" id="GO:0051402">
    <property type="term" value="P:neuron apoptotic process"/>
    <property type="evidence" value="ECO:0000318"/>
    <property type="project" value="GO_Central"/>
</dbReference>
<dbReference type="GO" id="GO:0043065">
    <property type="term" value="P:positive regulation of apoptotic process"/>
    <property type="evidence" value="ECO:0000314"/>
    <property type="project" value="UniProtKB"/>
</dbReference>
<dbReference type="GO" id="GO:0090200">
    <property type="term" value="P:positive regulation of release of cytochrome c from mitochondria"/>
    <property type="evidence" value="ECO:0000314"/>
    <property type="project" value="UniProtKB"/>
</dbReference>
<dbReference type="InterPro" id="IPR009432">
    <property type="entry name" value="DUF1075"/>
</dbReference>
<dbReference type="PANTHER" id="PTHR13674">
    <property type="entry name" value="GROWTH AND TRANSFORMATION-DEPENDENT PROTEIN"/>
    <property type="match status" value="1"/>
</dbReference>
<dbReference type="PANTHER" id="PTHR13674:SF2">
    <property type="entry name" value="PROTEIN FAM162A"/>
    <property type="match status" value="1"/>
</dbReference>
<dbReference type="Pfam" id="PF06388">
    <property type="entry name" value="DUF1075"/>
    <property type="match status" value="1"/>
</dbReference>
<proteinExistence type="evidence at protein level"/>
<evidence type="ECO:0000250" key="1">
    <source>
        <dbReference type="UniProtKB" id="Q9D6U8"/>
    </source>
</evidence>
<evidence type="ECO:0000255" key="2"/>
<evidence type="ECO:0000269" key="3">
    <source>
    </source>
</evidence>
<evidence type="ECO:0000269" key="4">
    <source>
    </source>
</evidence>
<evidence type="ECO:0000269" key="5">
    <source>
    </source>
</evidence>
<evidence type="ECO:0000269" key="6">
    <source>
    </source>
</evidence>
<evidence type="ECO:0000305" key="7"/>
<protein>
    <recommendedName>
        <fullName>Protein FAM162A</fullName>
    </recommendedName>
    <alternativeName>
        <fullName>E2-induced gene 5 protein</fullName>
    </alternativeName>
    <alternativeName>
        <fullName>Growth and transformation-dependent protein</fullName>
        <shortName>HGTD-P</shortName>
    </alternativeName>
</protein>
<gene>
    <name type="primary">FAM162A</name>
    <name type="synonym">C3orf28</name>
    <name type="synonym">E2IG5</name>
    <name type="ORF">DC16</name>
    <name type="ORF">FWP001</name>
</gene>
<reference key="1">
    <citation type="journal article" date="2000" name="Cancer Res.">
        <title>Effects of estrogen on global gene expression: identification of novel targets of estrogen action.</title>
        <authorList>
            <person name="Charpentier A.H."/>
            <person name="Bednarek A.K."/>
            <person name="Daniel R.L."/>
            <person name="Hawkins K.A."/>
            <person name="Laflin K.J."/>
            <person name="Gaddis S."/>
            <person name="MacLeod M.C."/>
            <person name="Aldaz C.M."/>
        </authorList>
    </citation>
    <scope>NUCLEOTIDE SEQUENCE [MRNA]</scope>
    <scope>INDUCTION</scope>
    <source>
        <tissue>Placenta</tissue>
    </source>
</reference>
<reference key="2">
    <citation type="submission" date="1999-11" db="EMBL/GenBank/DDBJ databases">
        <title>Novel genes expressed in human dendritic cell.</title>
        <authorList>
            <person name="Shi J."/>
            <person name="Peng Y."/>
            <person name="Li N."/>
            <person name="Gu W."/>
            <person name="Han Z."/>
            <person name="Fu G."/>
            <person name="Chen Z."/>
        </authorList>
    </citation>
    <scope>NUCLEOTIDE SEQUENCE [LARGE SCALE MRNA]</scope>
    <source>
        <tissue>Dendritic cell</tissue>
    </source>
</reference>
<reference key="3">
    <citation type="journal article" date="2004" name="Genome Res.">
        <title>The status, quality, and expansion of the NIH full-length cDNA project: the Mammalian Gene Collection (MGC).</title>
        <authorList>
            <consortium name="The MGC Project Team"/>
        </authorList>
    </citation>
    <scope>NUCLEOTIDE SEQUENCE [LARGE SCALE MRNA]</scope>
    <scope>VARIANT VAL-50</scope>
    <source>
        <tissue>Brain</tissue>
        <tissue>Prostate</tissue>
    </source>
</reference>
<reference key="4">
    <citation type="journal article" date="2004" name="Mol. Cell. Biol.">
        <title>Identification of the hypoxia-inducible factor 1 alpha-responsive HGTD-P gene as a mediator in the mitochondrial apoptotic pathway.</title>
        <authorList>
            <person name="Lee M.J."/>
            <person name="Kim J.Y."/>
            <person name="Suk K."/>
            <person name="Park J.H."/>
        </authorList>
    </citation>
    <scope>FUNCTION</scope>
    <scope>SUBCELLULAR LOCATION</scope>
    <scope>INTERACTION WITH VDAC2</scope>
</reference>
<reference key="5">
    <citation type="journal article" date="2006" name="FEBS Lett.">
        <title>Interaction of pro-apoptotic protein HGTD-P with heat shock protein 90 is required for induction of mitochondrial apoptotic cascades.</title>
        <authorList>
            <person name="Kim J.Y."/>
            <person name="Kim S.M."/>
            <person name="Ko J.H."/>
            <person name="Yim J.H."/>
            <person name="Park J.H."/>
            <person name="Park J.H."/>
        </authorList>
    </citation>
    <scope>INTERACTION WITH HSP90AB1</scope>
    <scope>SUBCELLULAR LOCATION</scope>
</reference>
<reference key="6">
    <citation type="journal article" date="2011" name="BMC Syst. Biol.">
        <title>Initial characterization of the human central proteome.</title>
        <authorList>
            <person name="Burkard T.R."/>
            <person name="Planyavsky M."/>
            <person name="Kaupe I."/>
            <person name="Breitwieser F.P."/>
            <person name="Buerckstuemmer T."/>
            <person name="Bennett K.L."/>
            <person name="Superti-Furga G."/>
            <person name="Colinge J."/>
        </authorList>
    </citation>
    <scope>IDENTIFICATION BY MASS SPECTROMETRY [LARGE SCALE ANALYSIS]</scope>
</reference>
<reference key="7">
    <citation type="journal article" date="2014" name="J. Proteomics">
        <title>An enzyme assisted RP-RPLC approach for in-depth analysis of human liver phosphoproteome.</title>
        <authorList>
            <person name="Bian Y."/>
            <person name="Song C."/>
            <person name="Cheng K."/>
            <person name="Dong M."/>
            <person name="Wang F."/>
            <person name="Huang J."/>
            <person name="Sun D."/>
            <person name="Wang L."/>
            <person name="Ye M."/>
            <person name="Zou H."/>
        </authorList>
    </citation>
    <scope>IDENTIFICATION BY MASS SPECTROMETRY [LARGE SCALE ANALYSIS]</scope>
    <source>
        <tissue>Liver</tissue>
    </source>
</reference>
<reference key="8">
    <citation type="journal article" date="2015" name="Proteomics">
        <title>N-terminome analysis of the human mitochondrial proteome.</title>
        <authorList>
            <person name="Vaca Jacome A.S."/>
            <person name="Rabilloud T."/>
            <person name="Schaeffer-Reiss C."/>
            <person name="Rompais M."/>
            <person name="Ayoub D."/>
            <person name="Lane L."/>
            <person name="Bairoch A."/>
            <person name="Van Dorsselaer A."/>
            <person name="Carapito C."/>
        </authorList>
    </citation>
    <scope>IDENTIFICATION BY MASS SPECTROMETRY [LARGE SCALE ANALYSIS]</scope>
</reference>
<name>F162A_HUMAN</name>
<comment type="function">
    <text evidence="1 4">Proposed to be involved in regulation of apoptosis; the exact mechanism may differ between cell types/tissues (PubMed:15082785). May be involved in hypoxia-induced cell death of transformed cells implicating cytochrome C release and caspase activation (such as CASP9) and inducing mitochondrial permeability transition (PubMed:15082785). May be involved in hypoxia-induced cell death of neuronal cells probably by promoting release of AIFM1 from mitochondria to cytoplasm and its translocation to the nucleus; however, the involvement of caspases has been reported conflictingly (By similarity).</text>
</comment>
<comment type="subunit">
    <text evidence="4 6">Interacts with HSP90AB1; HSP90AB1 is essential for FAM162A mitochondrial localization and pro-apoptotic activity (PubMed:16698020). Interacts with VDAC2; the interaction is probably involved in inducing mitochondrial permeability transition (PubMed:15082785).</text>
</comment>
<comment type="interaction">
    <interactant intactId="EBI-6123466">
        <id>Q96A26</id>
    </interactant>
    <interactant intactId="EBI-352572">
        <id>P08238</id>
        <label>HSP90AB1</label>
    </interactant>
    <organismsDiffer>false</organismsDiffer>
    <experiments>3</experiments>
</comment>
<comment type="interaction">
    <interactant intactId="EBI-6123466">
        <id>Q96A26</id>
    </interactant>
    <interactant intactId="EBI-354022">
        <id>P45880</id>
        <label>VDAC2</label>
    </interactant>
    <organismsDiffer>false</organismsDiffer>
    <experiments>2</experiments>
</comment>
<comment type="subcellular location">
    <subcellularLocation>
        <location evidence="4 6">Mitochondrion membrane</location>
        <topology evidence="7">Single-pass membrane protein</topology>
    </subcellularLocation>
</comment>
<comment type="induction">
    <text evidence="3">By 17-beta-estradiol. By hypoxia.</text>
</comment>
<comment type="similarity">
    <text evidence="7">Belongs to the UPF0389 family.</text>
</comment>
<comment type="sequence caution" evidence="7">
    <conflict type="frameshift">
        <sequence resource="EMBL-CDS" id="AAF09484"/>
    </conflict>
</comment>
<feature type="chain" id="PRO_0000254635" description="Protein FAM162A">
    <location>
        <begin position="1"/>
        <end position="154"/>
    </location>
</feature>
<feature type="transmembrane region" description="Helical" evidence="2">
    <location>
        <begin position="103"/>
        <end position="120"/>
    </location>
</feature>
<feature type="region of interest" description="Required for proapoptotic activity" evidence="4">
    <location>
        <begin position="76"/>
        <end position="102"/>
    </location>
</feature>
<feature type="sequence variant" id="VAR_028849" description="In dbSNP:rs17850692." evidence="5">
    <original>A</original>
    <variation>V</variation>
    <location>
        <position position="50"/>
    </location>
</feature>